<reference key="1">
    <citation type="journal article" date="1990" name="Regul. Pept.">
        <title>Pneumadin: a new lung peptide which triggers antidiuresis.</title>
        <authorList>
            <person name="Batra V.K."/>
            <person name="Mathur M."/>
            <person name="Mir S.A."/>
            <person name="Kapoor R."/>
            <person name="Kumar M.A."/>
        </authorList>
    </citation>
    <scope>PROTEIN SEQUENCE</scope>
    <scope>AMIDATION AT VAL-10</scope>
    <scope>SYNTHESIS</scope>
    <source>
        <tissue>Lung</tissue>
    </source>
</reference>
<organism>
    <name type="scientific">Rattus norvegicus</name>
    <name type="common">Rat</name>
    <dbReference type="NCBI Taxonomy" id="10116"/>
    <lineage>
        <taxon>Eukaryota</taxon>
        <taxon>Metazoa</taxon>
        <taxon>Chordata</taxon>
        <taxon>Craniata</taxon>
        <taxon>Vertebrata</taxon>
        <taxon>Euteleostomi</taxon>
        <taxon>Mammalia</taxon>
        <taxon>Eutheria</taxon>
        <taxon>Euarchontoglires</taxon>
        <taxon>Glires</taxon>
        <taxon>Rodentia</taxon>
        <taxon>Myomorpha</taxon>
        <taxon>Muroidea</taxon>
        <taxon>Muridae</taxon>
        <taxon>Murinae</taxon>
        <taxon>Rattus</taxon>
    </lineage>
</organism>
<sequence length="10" mass="1048">YGEPKLDAGV</sequence>
<evidence type="ECO:0000269" key="1">
    <source>
    </source>
</evidence>
<keyword id="KW-0027">Amidation</keyword>
<keyword id="KW-0903">Direct protein sequencing</keyword>
<keyword id="KW-1185">Reference proteome</keyword>
<feature type="peptide" id="PRO_0000044207" description="Pneumadin">
    <location>
        <begin position="1"/>
        <end position="10"/>
    </location>
</feature>
<feature type="modified residue" description="Valine amide" evidence="1">
    <location>
        <position position="10"/>
    </location>
</feature>
<name>PNEU_RAT</name>
<dbReference type="PIR" id="A33143">
    <property type="entry name" value="A33143"/>
</dbReference>
<dbReference type="InParanoid" id="P21996"/>
<dbReference type="Proteomes" id="UP000002494">
    <property type="component" value="Unplaced"/>
</dbReference>
<accession>P21996</accession>
<proteinExistence type="evidence at protein level"/>
<comment type="function">
    <text>This antidiuretic peptide triggers the release of ADH.</text>
</comment>
<protein>
    <recommendedName>
        <fullName>Pneumadin</fullName>
        <shortName>PNM</shortName>
    </recommendedName>
</protein>